<sequence>MSLLDWFAERRKQTSLNLTGSSPFDKERQVREIADGLWQKCPACDALTYTKDLQQNWQVCPSCGYHHRITAPQRLQQLLDPGSWQPLDEHLAPTDPLHFFDQKPYAERLASYQERTQLKDAVLTGLGSLEGIPVAMGVMDFRFMGGSMGSVVGEKITRLTERATRDHLPLVIFSASGGARMQEGILSLMQMAKTAAALQRHREAGQLFISVLTHPTYGGVTASFAMLGDLILAEPGAQVGFAGPNVIEQTIGKGKLPEGFQTAEYLLAHGLIDAIVPRTELRRRLAQLLAMHRPRLRMSLPALEPTYALDPARI</sequence>
<feature type="chain" id="PRO_0000359078" description="Acetyl-coenzyme A carboxylase carboxyl transferase subunit beta">
    <location>
        <begin position="1"/>
        <end position="314"/>
    </location>
</feature>
<feature type="domain" description="CoA carboxyltransferase N-terminal" evidence="2">
    <location>
        <begin position="37"/>
        <end position="307"/>
    </location>
</feature>
<feature type="zinc finger region" description="C4-type" evidence="1">
    <location>
        <begin position="41"/>
        <end position="63"/>
    </location>
</feature>
<feature type="binding site" evidence="1">
    <location>
        <position position="41"/>
    </location>
    <ligand>
        <name>Zn(2+)</name>
        <dbReference type="ChEBI" id="CHEBI:29105"/>
    </ligand>
</feature>
<feature type="binding site" evidence="1">
    <location>
        <position position="44"/>
    </location>
    <ligand>
        <name>Zn(2+)</name>
        <dbReference type="ChEBI" id="CHEBI:29105"/>
    </ligand>
</feature>
<feature type="binding site" evidence="1">
    <location>
        <position position="60"/>
    </location>
    <ligand>
        <name>Zn(2+)</name>
        <dbReference type="ChEBI" id="CHEBI:29105"/>
    </ligand>
</feature>
<feature type="binding site" evidence="1">
    <location>
        <position position="63"/>
    </location>
    <ligand>
        <name>Zn(2+)</name>
        <dbReference type="ChEBI" id="CHEBI:29105"/>
    </ligand>
</feature>
<protein>
    <recommendedName>
        <fullName evidence="1">Acetyl-coenzyme A carboxylase carboxyl transferase subunit beta</fullName>
        <shortName evidence="1">ACCase subunit beta</shortName>
        <shortName evidence="1">Acetyl-CoA carboxylase carboxyltransferase subunit beta</shortName>
        <ecNumber evidence="1">2.1.3.15</ecNumber>
    </recommendedName>
</protein>
<organism>
    <name type="scientific">Synechococcus sp. (strain JA-3-3Ab)</name>
    <name type="common">Cyanobacteria bacterium Yellowstone A-Prime</name>
    <dbReference type="NCBI Taxonomy" id="321327"/>
    <lineage>
        <taxon>Bacteria</taxon>
        <taxon>Bacillati</taxon>
        <taxon>Cyanobacteriota</taxon>
        <taxon>Cyanophyceae</taxon>
        <taxon>Synechococcales</taxon>
        <taxon>Synechococcaceae</taxon>
        <taxon>Synechococcus</taxon>
    </lineage>
</organism>
<comment type="function">
    <text evidence="1">Component of the acetyl coenzyme A carboxylase (ACC) complex. Biotin carboxylase (BC) catalyzes the carboxylation of biotin on its carrier protein (BCCP) and then the CO(2) group is transferred by the transcarboxylase to acetyl-CoA to form malonyl-CoA.</text>
</comment>
<comment type="catalytic activity">
    <reaction evidence="1">
        <text>N(6)-carboxybiotinyl-L-lysyl-[protein] + acetyl-CoA = N(6)-biotinyl-L-lysyl-[protein] + malonyl-CoA</text>
        <dbReference type="Rhea" id="RHEA:54728"/>
        <dbReference type="Rhea" id="RHEA-COMP:10505"/>
        <dbReference type="Rhea" id="RHEA-COMP:10506"/>
        <dbReference type="ChEBI" id="CHEBI:57288"/>
        <dbReference type="ChEBI" id="CHEBI:57384"/>
        <dbReference type="ChEBI" id="CHEBI:83144"/>
        <dbReference type="ChEBI" id="CHEBI:83145"/>
        <dbReference type="EC" id="2.1.3.15"/>
    </reaction>
</comment>
<comment type="cofactor">
    <cofactor evidence="1">
        <name>Zn(2+)</name>
        <dbReference type="ChEBI" id="CHEBI:29105"/>
    </cofactor>
    <text evidence="1">Binds 1 zinc ion per subunit.</text>
</comment>
<comment type="pathway">
    <text evidence="1">Lipid metabolism; malonyl-CoA biosynthesis; malonyl-CoA from acetyl-CoA: step 1/1.</text>
</comment>
<comment type="subunit">
    <text evidence="1">Acetyl-CoA carboxylase is a heterohexamer composed of biotin carboxyl carrier protein (AccB), biotin carboxylase (AccC) and two subunits each of ACCase subunit alpha (AccA) and ACCase subunit beta (AccD).</text>
</comment>
<comment type="subcellular location">
    <subcellularLocation>
        <location evidence="1">Cytoplasm</location>
    </subcellularLocation>
</comment>
<comment type="similarity">
    <text evidence="1">Belongs to the AccD/PCCB family.</text>
</comment>
<reference key="1">
    <citation type="journal article" date="2007" name="ISME J.">
        <title>Population level functional diversity in a microbial community revealed by comparative genomic and metagenomic analyses.</title>
        <authorList>
            <person name="Bhaya D."/>
            <person name="Grossman A.R."/>
            <person name="Steunou A.-S."/>
            <person name="Khuri N."/>
            <person name="Cohan F.M."/>
            <person name="Hamamura N."/>
            <person name="Melendrez M.C."/>
            <person name="Bateson M.M."/>
            <person name="Ward D.M."/>
            <person name="Heidelberg J.F."/>
        </authorList>
    </citation>
    <scope>NUCLEOTIDE SEQUENCE [LARGE SCALE GENOMIC DNA]</scope>
    <source>
        <strain>JA-3-3Ab</strain>
    </source>
</reference>
<proteinExistence type="inferred from homology"/>
<gene>
    <name evidence="1" type="primary">accD</name>
    <name type="ordered locus">CYA_2104</name>
</gene>
<evidence type="ECO:0000255" key="1">
    <source>
        <dbReference type="HAMAP-Rule" id="MF_01395"/>
    </source>
</evidence>
<evidence type="ECO:0000255" key="2">
    <source>
        <dbReference type="PROSITE-ProRule" id="PRU01136"/>
    </source>
</evidence>
<accession>Q2JSX0</accession>
<keyword id="KW-0067">ATP-binding</keyword>
<keyword id="KW-0963">Cytoplasm</keyword>
<keyword id="KW-0275">Fatty acid biosynthesis</keyword>
<keyword id="KW-0276">Fatty acid metabolism</keyword>
<keyword id="KW-0444">Lipid biosynthesis</keyword>
<keyword id="KW-0443">Lipid metabolism</keyword>
<keyword id="KW-0479">Metal-binding</keyword>
<keyword id="KW-0547">Nucleotide-binding</keyword>
<keyword id="KW-0808">Transferase</keyword>
<keyword id="KW-0862">Zinc</keyword>
<keyword id="KW-0863">Zinc-finger</keyword>
<dbReference type="EC" id="2.1.3.15" evidence="1"/>
<dbReference type="EMBL" id="CP000239">
    <property type="protein sequence ID" value="ABD00244.1"/>
    <property type="molecule type" value="Genomic_DNA"/>
</dbReference>
<dbReference type="RefSeq" id="WP_011430918.1">
    <property type="nucleotide sequence ID" value="NC_007775.1"/>
</dbReference>
<dbReference type="SMR" id="Q2JSX0"/>
<dbReference type="STRING" id="321327.CYA_2104"/>
<dbReference type="KEGG" id="cya:CYA_2104"/>
<dbReference type="eggNOG" id="COG0777">
    <property type="taxonomic scope" value="Bacteria"/>
</dbReference>
<dbReference type="HOGENOM" id="CLU_015486_1_1_3"/>
<dbReference type="OrthoDB" id="9772975at2"/>
<dbReference type="UniPathway" id="UPA00655">
    <property type="reaction ID" value="UER00711"/>
</dbReference>
<dbReference type="Proteomes" id="UP000008818">
    <property type="component" value="Chromosome"/>
</dbReference>
<dbReference type="GO" id="GO:0009317">
    <property type="term" value="C:acetyl-CoA carboxylase complex"/>
    <property type="evidence" value="ECO:0007669"/>
    <property type="project" value="InterPro"/>
</dbReference>
<dbReference type="GO" id="GO:0003989">
    <property type="term" value="F:acetyl-CoA carboxylase activity"/>
    <property type="evidence" value="ECO:0007669"/>
    <property type="project" value="InterPro"/>
</dbReference>
<dbReference type="GO" id="GO:0005524">
    <property type="term" value="F:ATP binding"/>
    <property type="evidence" value="ECO:0007669"/>
    <property type="project" value="UniProtKB-KW"/>
</dbReference>
<dbReference type="GO" id="GO:0016743">
    <property type="term" value="F:carboxyl- or carbamoyltransferase activity"/>
    <property type="evidence" value="ECO:0007669"/>
    <property type="project" value="UniProtKB-UniRule"/>
</dbReference>
<dbReference type="GO" id="GO:0008270">
    <property type="term" value="F:zinc ion binding"/>
    <property type="evidence" value="ECO:0007669"/>
    <property type="project" value="UniProtKB-UniRule"/>
</dbReference>
<dbReference type="GO" id="GO:0006633">
    <property type="term" value="P:fatty acid biosynthetic process"/>
    <property type="evidence" value="ECO:0007669"/>
    <property type="project" value="UniProtKB-KW"/>
</dbReference>
<dbReference type="GO" id="GO:2001295">
    <property type="term" value="P:malonyl-CoA biosynthetic process"/>
    <property type="evidence" value="ECO:0007669"/>
    <property type="project" value="UniProtKB-UniRule"/>
</dbReference>
<dbReference type="Gene3D" id="3.90.226.10">
    <property type="entry name" value="2-enoyl-CoA Hydratase, Chain A, domain 1"/>
    <property type="match status" value="1"/>
</dbReference>
<dbReference type="HAMAP" id="MF_01395">
    <property type="entry name" value="AcetylCoA_CT_beta"/>
    <property type="match status" value="1"/>
</dbReference>
<dbReference type="InterPro" id="IPR034733">
    <property type="entry name" value="AcCoA_carboxyl_beta"/>
</dbReference>
<dbReference type="InterPro" id="IPR000438">
    <property type="entry name" value="Acetyl_CoA_COase_Trfase_b_su"/>
</dbReference>
<dbReference type="InterPro" id="IPR029045">
    <property type="entry name" value="ClpP/crotonase-like_dom_sf"/>
</dbReference>
<dbReference type="InterPro" id="IPR011762">
    <property type="entry name" value="COA_CT_N"/>
</dbReference>
<dbReference type="InterPro" id="IPR041010">
    <property type="entry name" value="Znf-ACC"/>
</dbReference>
<dbReference type="NCBIfam" id="TIGR00515">
    <property type="entry name" value="accD"/>
    <property type="match status" value="1"/>
</dbReference>
<dbReference type="PANTHER" id="PTHR42995">
    <property type="entry name" value="ACETYL-COENZYME A CARBOXYLASE CARBOXYL TRANSFERASE SUBUNIT BETA, CHLOROPLASTIC"/>
    <property type="match status" value="1"/>
</dbReference>
<dbReference type="PANTHER" id="PTHR42995:SF5">
    <property type="entry name" value="ACETYL-COENZYME A CARBOXYLASE CARBOXYL TRANSFERASE SUBUNIT BETA, CHLOROPLASTIC"/>
    <property type="match status" value="1"/>
</dbReference>
<dbReference type="Pfam" id="PF01039">
    <property type="entry name" value="Carboxyl_trans"/>
    <property type="match status" value="1"/>
</dbReference>
<dbReference type="Pfam" id="PF17848">
    <property type="entry name" value="Zn_ribbon_ACC"/>
    <property type="match status" value="1"/>
</dbReference>
<dbReference type="PRINTS" id="PR01070">
    <property type="entry name" value="ACCCTRFRASEB"/>
</dbReference>
<dbReference type="SUPFAM" id="SSF52096">
    <property type="entry name" value="ClpP/crotonase"/>
    <property type="match status" value="1"/>
</dbReference>
<dbReference type="PROSITE" id="PS50980">
    <property type="entry name" value="COA_CT_NTER"/>
    <property type="match status" value="1"/>
</dbReference>
<name>ACCD_SYNJA</name>